<name>LEU1_BUCCC</name>
<accession>Q5WQ01</accession>
<protein>
    <recommendedName>
        <fullName evidence="1">2-isopropylmalate synthase</fullName>
        <ecNumber evidence="1">2.3.3.13</ecNumber>
    </recommendedName>
    <alternativeName>
        <fullName evidence="1">Alpha-IPM synthase</fullName>
    </alternativeName>
    <alternativeName>
        <fullName evidence="1">Alpha-isopropylmalate synthase</fullName>
    </alternativeName>
</protein>
<gene>
    <name evidence="1" type="primary">leuA</name>
    <name type="ordered locus">BCc_PL1</name>
</gene>
<feature type="chain" id="PRO_0000274186" description="2-isopropylmalate synthase">
    <location>
        <begin position="1"/>
        <end position="516"/>
    </location>
</feature>
<feature type="domain" description="Pyruvate carboxyltransferase" evidence="1">
    <location>
        <begin position="5"/>
        <end position="267"/>
    </location>
</feature>
<feature type="region of interest" description="Regulatory domain" evidence="1">
    <location>
        <begin position="393"/>
        <end position="516"/>
    </location>
</feature>
<feature type="binding site" evidence="1">
    <location>
        <position position="14"/>
    </location>
    <ligand>
        <name>Mn(2+)</name>
        <dbReference type="ChEBI" id="CHEBI:29035"/>
    </ligand>
</feature>
<feature type="binding site" evidence="1">
    <location>
        <position position="202"/>
    </location>
    <ligand>
        <name>Mn(2+)</name>
        <dbReference type="ChEBI" id="CHEBI:29035"/>
    </ligand>
</feature>
<feature type="binding site" evidence="1">
    <location>
        <position position="204"/>
    </location>
    <ligand>
        <name>Mn(2+)</name>
        <dbReference type="ChEBI" id="CHEBI:29035"/>
    </ligand>
</feature>
<feature type="binding site" evidence="1">
    <location>
        <position position="238"/>
    </location>
    <ligand>
        <name>Mn(2+)</name>
        <dbReference type="ChEBI" id="CHEBI:29035"/>
    </ligand>
</feature>
<geneLocation type="plasmid">
    <name>pLeu-BCc</name>
</geneLocation>
<keyword id="KW-0028">Amino-acid biosynthesis</keyword>
<keyword id="KW-0100">Branched-chain amino acid biosynthesis</keyword>
<keyword id="KW-0963">Cytoplasm</keyword>
<keyword id="KW-0432">Leucine biosynthesis</keyword>
<keyword id="KW-0464">Manganese</keyword>
<keyword id="KW-0479">Metal-binding</keyword>
<keyword id="KW-0614">Plasmid</keyword>
<keyword id="KW-1185">Reference proteome</keyword>
<keyword id="KW-0808">Transferase</keyword>
<sequence>MNEKIIIFDTTLRDGEQALLTSLTSNEKIQIALALERLGVDVIEVGFPVSSPGDFKSVQMLSKIIKNSKICSLARCLPNDITIAADAMQFSKNFRIHLFLGTSDLHVSSKLKKNFNEIIEMAVASVKQAKKFTNDIEFSCEDAGRTTLQNLYCIIEAVIKAGATTVNIPDTVGYTTPTQFKKIITMLFNHVKNIHQAIISVHCHNDLGMAVANSISAVEAGVRQIEGTMNGLGERAGNAALEEVIMTLNVHKNSLKVSTDINIKEIHRTSKIVSQFCNTPIPLNKAIIGKNVFSHSSGIHQDGVLKNRKNYEIIDPNSIGFTDYCSLNLTSRSGRAAVKHHMKKMGYENSDYNLNELYIDFLKLADKKGRIFDYDLEALAFFKKQQNTEEYYKLEYFDVQSKLSGLSTAYIVLICGSQTNIQKATTYNGPVDAIYQALNKATLYSIVLKKFHLEANGEGKDALGKVNIIVQYKLRNFHGVGLATDIIEASAQAMVNVLNYIWKSQQVNKELERLQK</sequence>
<proteinExistence type="inferred from homology"/>
<organism>
    <name type="scientific">Buchnera aphidicola subsp. Cinara cedri (strain Cc)</name>
    <dbReference type="NCBI Taxonomy" id="372461"/>
    <lineage>
        <taxon>Bacteria</taxon>
        <taxon>Pseudomonadati</taxon>
        <taxon>Pseudomonadota</taxon>
        <taxon>Gammaproteobacteria</taxon>
        <taxon>Enterobacterales</taxon>
        <taxon>Erwiniaceae</taxon>
        <taxon>Buchnera</taxon>
    </lineage>
</organism>
<evidence type="ECO:0000255" key="1">
    <source>
        <dbReference type="HAMAP-Rule" id="MF_01025"/>
    </source>
</evidence>
<evidence type="ECO:0000305" key="2"/>
<dbReference type="EC" id="2.3.3.13" evidence="1"/>
<dbReference type="EMBL" id="AY438025">
    <property type="protein sequence ID" value="AAR99732.1"/>
    <property type="molecule type" value="Genomic_DNA"/>
</dbReference>
<dbReference type="RefSeq" id="WP_012622901.1">
    <property type="nucleotide sequence ID" value="NC_011878.1"/>
</dbReference>
<dbReference type="SMR" id="Q5WQ01"/>
<dbReference type="KEGG" id="bcc:leuA"/>
<dbReference type="eggNOG" id="COG0119">
    <property type="taxonomic scope" value="Bacteria"/>
</dbReference>
<dbReference type="HOGENOM" id="CLU_022158_0_1_6"/>
<dbReference type="OrthoDB" id="9803573at2"/>
<dbReference type="UniPathway" id="UPA00048">
    <property type="reaction ID" value="UER00070"/>
</dbReference>
<dbReference type="Proteomes" id="UP000000669">
    <property type="component" value="Plasmid pLeu-BCc"/>
</dbReference>
<dbReference type="GO" id="GO:0005829">
    <property type="term" value="C:cytosol"/>
    <property type="evidence" value="ECO:0007669"/>
    <property type="project" value="TreeGrafter"/>
</dbReference>
<dbReference type="GO" id="GO:0003852">
    <property type="term" value="F:2-isopropylmalate synthase activity"/>
    <property type="evidence" value="ECO:0007669"/>
    <property type="project" value="UniProtKB-UniRule"/>
</dbReference>
<dbReference type="GO" id="GO:0003985">
    <property type="term" value="F:acetyl-CoA C-acetyltransferase activity"/>
    <property type="evidence" value="ECO:0007669"/>
    <property type="project" value="UniProtKB-UniRule"/>
</dbReference>
<dbReference type="GO" id="GO:0030145">
    <property type="term" value="F:manganese ion binding"/>
    <property type="evidence" value="ECO:0007669"/>
    <property type="project" value="UniProtKB-UniRule"/>
</dbReference>
<dbReference type="GO" id="GO:0009098">
    <property type="term" value="P:L-leucine biosynthetic process"/>
    <property type="evidence" value="ECO:0007669"/>
    <property type="project" value="UniProtKB-UniRule"/>
</dbReference>
<dbReference type="CDD" id="cd07940">
    <property type="entry name" value="DRE_TIM_IPMS"/>
    <property type="match status" value="1"/>
</dbReference>
<dbReference type="FunFam" id="1.10.238.260:FF:000001">
    <property type="entry name" value="2-isopropylmalate synthase"/>
    <property type="match status" value="1"/>
</dbReference>
<dbReference type="FunFam" id="3.20.20.70:FF:000010">
    <property type="entry name" value="2-isopropylmalate synthase"/>
    <property type="match status" value="1"/>
</dbReference>
<dbReference type="Gene3D" id="1.10.238.260">
    <property type="match status" value="1"/>
</dbReference>
<dbReference type="Gene3D" id="3.30.160.270">
    <property type="match status" value="1"/>
</dbReference>
<dbReference type="Gene3D" id="3.20.20.70">
    <property type="entry name" value="Aldolase class I"/>
    <property type="match status" value="1"/>
</dbReference>
<dbReference type="HAMAP" id="MF_01025">
    <property type="entry name" value="LeuA_type1"/>
    <property type="match status" value="1"/>
</dbReference>
<dbReference type="InterPro" id="IPR050073">
    <property type="entry name" value="2-IPM_HCS-like"/>
</dbReference>
<dbReference type="InterPro" id="IPR013709">
    <property type="entry name" value="2-isopropylmalate_synth_dimer"/>
</dbReference>
<dbReference type="InterPro" id="IPR002034">
    <property type="entry name" value="AIPM/Hcit_synth_CS"/>
</dbReference>
<dbReference type="InterPro" id="IPR013785">
    <property type="entry name" value="Aldolase_TIM"/>
</dbReference>
<dbReference type="InterPro" id="IPR054691">
    <property type="entry name" value="LeuA/HCS_post-cat"/>
</dbReference>
<dbReference type="InterPro" id="IPR036230">
    <property type="entry name" value="LeuA_allosteric_dom_sf"/>
</dbReference>
<dbReference type="InterPro" id="IPR005671">
    <property type="entry name" value="LeuA_bact_synth"/>
</dbReference>
<dbReference type="InterPro" id="IPR000891">
    <property type="entry name" value="PYR_CT"/>
</dbReference>
<dbReference type="NCBIfam" id="TIGR00973">
    <property type="entry name" value="leuA_bact"/>
    <property type="match status" value="1"/>
</dbReference>
<dbReference type="NCBIfam" id="NF002084">
    <property type="entry name" value="PRK00915.1-1"/>
    <property type="match status" value="1"/>
</dbReference>
<dbReference type="NCBIfam" id="NF002086">
    <property type="entry name" value="PRK00915.1-3"/>
    <property type="match status" value="1"/>
</dbReference>
<dbReference type="PANTHER" id="PTHR10277:SF9">
    <property type="entry name" value="2-ISOPROPYLMALATE SYNTHASE 1, CHLOROPLASTIC-RELATED"/>
    <property type="match status" value="1"/>
</dbReference>
<dbReference type="PANTHER" id="PTHR10277">
    <property type="entry name" value="HOMOCITRATE SYNTHASE-RELATED"/>
    <property type="match status" value="1"/>
</dbReference>
<dbReference type="Pfam" id="PF22617">
    <property type="entry name" value="HCS_D2"/>
    <property type="match status" value="1"/>
</dbReference>
<dbReference type="Pfam" id="PF00682">
    <property type="entry name" value="HMGL-like"/>
    <property type="match status" value="1"/>
</dbReference>
<dbReference type="Pfam" id="PF08502">
    <property type="entry name" value="LeuA_dimer"/>
    <property type="match status" value="1"/>
</dbReference>
<dbReference type="SMART" id="SM00917">
    <property type="entry name" value="LeuA_dimer"/>
    <property type="match status" value="1"/>
</dbReference>
<dbReference type="SUPFAM" id="SSF110921">
    <property type="entry name" value="2-isopropylmalate synthase LeuA, allosteric (dimerisation) domain"/>
    <property type="match status" value="1"/>
</dbReference>
<dbReference type="SUPFAM" id="SSF51569">
    <property type="entry name" value="Aldolase"/>
    <property type="match status" value="1"/>
</dbReference>
<dbReference type="PROSITE" id="PS00815">
    <property type="entry name" value="AIPM_HOMOCIT_SYNTH_1"/>
    <property type="match status" value="1"/>
</dbReference>
<dbReference type="PROSITE" id="PS00816">
    <property type="entry name" value="AIPM_HOMOCIT_SYNTH_2"/>
    <property type="match status" value="1"/>
</dbReference>
<dbReference type="PROSITE" id="PS50991">
    <property type="entry name" value="PYR_CT"/>
    <property type="match status" value="1"/>
</dbReference>
<reference key="1">
    <citation type="journal article" date="2006" name="Gene">
        <title>Plasmids in the aphid endosymbiont Buchnera aphidicola with the smallest genomes. A puzzling evolutionary story.</title>
        <authorList>
            <person name="Gil R."/>
            <person name="Sabater-Munoz B."/>
            <person name="Perez-Brocal V."/>
            <person name="Silva F.J."/>
            <person name="Latorre A."/>
        </authorList>
    </citation>
    <scope>NUCLEOTIDE SEQUENCE [LARGE SCALE GENOMIC DNA]</scope>
    <source>
        <strain>Cc</strain>
    </source>
</reference>
<reference key="2">
    <citation type="journal article" date="2006" name="Science">
        <title>A small microbial genome: the end of a long symbiotic relationship?</title>
        <authorList>
            <person name="Perez-Brocal V."/>
            <person name="Gil R."/>
            <person name="Ramos S."/>
            <person name="Lamelas A."/>
            <person name="Postigo M."/>
            <person name="Michelena J.M."/>
            <person name="Silva F.J."/>
            <person name="Moya A."/>
            <person name="Latorre A."/>
        </authorList>
    </citation>
    <scope>NUCLEOTIDE SEQUENCE [LARGE SCALE GENOMIC DNA]</scope>
    <source>
        <strain>Cc</strain>
    </source>
</reference>
<comment type="function">
    <text evidence="1">Catalyzes the condensation of the acetyl group of acetyl-CoA with 3-methyl-2-oxobutanoate (2-ketoisovalerate) to form 3-carboxy-3-hydroxy-4-methylpentanoate (2-isopropylmalate).</text>
</comment>
<comment type="catalytic activity">
    <reaction evidence="1">
        <text>3-methyl-2-oxobutanoate + acetyl-CoA + H2O = (2S)-2-isopropylmalate + CoA + H(+)</text>
        <dbReference type="Rhea" id="RHEA:21524"/>
        <dbReference type="ChEBI" id="CHEBI:1178"/>
        <dbReference type="ChEBI" id="CHEBI:11851"/>
        <dbReference type="ChEBI" id="CHEBI:15377"/>
        <dbReference type="ChEBI" id="CHEBI:15378"/>
        <dbReference type="ChEBI" id="CHEBI:57287"/>
        <dbReference type="ChEBI" id="CHEBI:57288"/>
        <dbReference type="EC" id="2.3.3.13"/>
    </reaction>
</comment>
<comment type="cofactor">
    <cofactor evidence="1">
        <name>Mn(2+)</name>
        <dbReference type="ChEBI" id="CHEBI:29035"/>
    </cofactor>
</comment>
<comment type="pathway">
    <text evidence="1">Amino-acid biosynthesis; L-leucine biosynthesis; L-leucine from 3-methyl-2-oxobutanoate: step 1/4.</text>
</comment>
<comment type="subunit">
    <text evidence="1">Homodimer.</text>
</comment>
<comment type="subcellular location">
    <subcellularLocation>
        <location evidence="1">Cytoplasm</location>
    </subcellularLocation>
</comment>
<comment type="similarity">
    <text evidence="1 2">Belongs to the alpha-IPM synthase/homocitrate synthase family. LeuA type 1 subfamily.</text>
</comment>